<comment type="function">
    <text evidence="1">DNA-dependent RNA polymerase catalyzes the transcription of DNA into RNA using the four ribonucleoside triphosphates as substrates.</text>
</comment>
<comment type="catalytic activity">
    <reaction evidence="1">
        <text>RNA(n) + a ribonucleoside 5'-triphosphate = RNA(n+1) + diphosphate</text>
        <dbReference type="Rhea" id="RHEA:21248"/>
        <dbReference type="Rhea" id="RHEA-COMP:14527"/>
        <dbReference type="Rhea" id="RHEA-COMP:17342"/>
        <dbReference type="ChEBI" id="CHEBI:33019"/>
        <dbReference type="ChEBI" id="CHEBI:61557"/>
        <dbReference type="ChEBI" id="CHEBI:140395"/>
        <dbReference type="EC" id="2.7.7.6"/>
    </reaction>
</comment>
<comment type="subunit">
    <text evidence="1">The RNAP catalytic core consists of 2 alpha, 1 beta, 1 beta' and 1 omega subunit. When a sigma factor is associated with the core the holoenzyme is formed, which can initiate transcription.</text>
</comment>
<comment type="similarity">
    <text evidence="1">Belongs to the RNA polymerase beta chain family.</text>
</comment>
<proteinExistence type="inferred from homology"/>
<gene>
    <name evidence="1" type="primary">rpoB</name>
    <name type="ordered locus">SAV_4914</name>
</gene>
<keyword id="KW-0240">DNA-directed RNA polymerase</keyword>
<keyword id="KW-0548">Nucleotidyltransferase</keyword>
<keyword id="KW-1185">Reference proteome</keyword>
<keyword id="KW-0804">Transcription</keyword>
<keyword id="KW-0808">Transferase</keyword>
<feature type="chain" id="PRO_0000047971" description="DNA-directed RNA polymerase subunit beta">
    <location>
        <begin position="1"/>
        <end position="1161"/>
    </location>
</feature>
<protein>
    <recommendedName>
        <fullName evidence="1">DNA-directed RNA polymerase subunit beta</fullName>
        <shortName evidence="1">RNAP subunit beta</shortName>
        <ecNumber evidence="1">2.7.7.6</ecNumber>
    </recommendedName>
    <alternativeName>
        <fullName evidence="1">RNA polymerase subunit beta</fullName>
    </alternativeName>
    <alternativeName>
        <fullName evidence="1">Transcriptase subunit beta</fullName>
    </alternativeName>
</protein>
<accession>Q82DQ5</accession>
<name>RPOB_STRAW</name>
<evidence type="ECO:0000255" key="1">
    <source>
        <dbReference type="HAMAP-Rule" id="MF_01321"/>
    </source>
</evidence>
<organism>
    <name type="scientific">Streptomyces avermitilis (strain ATCC 31267 / DSM 46492 / JCM 5070 / NBRC 14893 / NCIMB 12804 / NRRL 8165 / MA-4680)</name>
    <dbReference type="NCBI Taxonomy" id="227882"/>
    <lineage>
        <taxon>Bacteria</taxon>
        <taxon>Bacillati</taxon>
        <taxon>Actinomycetota</taxon>
        <taxon>Actinomycetes</taxon>
        <taxon>Kitasatosporales</taxon>
        <taxon>Streptomycetaceae</taxon>
        <taxon>Streptomyces</taxon>
    </lineage>
</organism>
<sequence length="1161" mass="128297">MAASRTASTANTNNGASTAPLRISFAKIKEPLEVPNLLALQTESFDWLLGNDAWKARVEAALDSGQDVPTKSGLEEIFEEISPIEDFSGSMSLTFRDHRFEPPKNSIDECKDRDFTYAAPLFVTAEFTNNETGEIKSQTVFMGDFPLMTNKGTFVINGTERVVVSQLVRSPGVYFDSSIDKTSDKDIFSAKVIPSRGAWLEMEIDKRDMVGVRIDRKRKQSVTVLLKALGWTTEQILEEFGEYESMRATLEKDHTQGQDDALLDIYRKLRPGEPPTREAAQTLLENLYFNPKRYDLAKVGRYKVNKKLGGEAPLDAGILTVEDIISSIKYLVKLHAGETETVGDNGTSIVVETDDIDHFGNRRLRNVGELIQNQVRTGLARMERVVRERMTTQDVEAITPQTLINIRPVVASIKEFFGTSQLSQFMDQNNPLSGLTHKRRLSALGPGGLSRERAGFEVRDVHPSHYGRMCPIETPEGPNIGLIGSLASYGRVNAFGFVETPYRRVTDGVVTDEVDYLTADEEDRFVIAQANAPLGDDFRFEETRVLVRRRGGEVDYVPGDDVDYMDVSPRQMVSVATAMIPFLEHDDANRALMGANMMRQAVPLIKSEAPLVGTGMEYRCAVDAGDVLKSEKDGVVQEVSADYVTTANDDGTYTTYRLHKFSRSNQGTSVNQKVVVDEGARVIAGQVLADGPATENGEMALGKNLLVAFMPWEGHNYEDAIILSQRLVQDDVLSSIHIEEHEVDARDTKLGPEEITRDIPNVSEEVLADLDERGIIRIGAEVVAGDILVGKVTPKGETELTPEERLLRAIFGEKAREVRDTSLKVPHGEIGKVIGVRVFDREEGDELPPGVNQLVRVYVAQKRKITDGDKLAGRHGNKGVISKILPIEDMPFLEDGTPVDIILNPLGVPSRMNPGQVLEIHLGWLASRGWDVSGLADDWAQRLQAIEADQVAPGTNVATPVFDGAREDELAGLLQHTIPNRDGERMVLPTGKAPLFDGRSGEPFPEPISVGYMYILKLHHLVDDKLHARSTGPYSMITQQPLGGKAQFGGQRFGEMEVWALEAYGAAYALQELLTIKSDDVTGRVKVYEAIVKGENIPEPGIPESFKVLIKEMQSLCLNVEVLSSDGMSIEMRDTDEDVFRAAEELGIDLSRREPSSVEEV</sequence>
<dbReference type="EC" id="2.7.7.6" evidence="1"/>
<dbReference type="EMBL" id="BA000030">
    <property type="protein sequence ID" value="BAC72626.2"/>
    <property type="molecule type" value="Genomic_DNA"/>
</dbReference>
<dbReference type="RefSeq" id="WP_037647936.1">
    <property type="nucleotide sequence ID" value="NZ_JZJK01000077.1"/>
</dbReference>
<dbReference type="SMR" id="Q82DQ5"/>
<dbReference type="GeneID" id="41541998"/>
<dbReference type="KEGG" id="sma:SAVERM_4914"/>
<dbReference type="eggNOG" id="COG0085">
    <property type="taxonomic scope" value="Bacteria"/>
</dbReference>
<dbReference type="HOGENOM" id="CLU_000524_4_1_11"/>
<dbReference type="OrthoDB" id="9803954at2"/>
<dbReference type="Proteomes" id="UP000000428">
    <property type="component" value="Chromosome"/>
</dbReference>
<dbReference type="GO" id="GO:0000428">
    <property type="term" value="C:DNA-directed RNA polymerase complex"/>
    <property type="evidence" value="ECO:0007669"/>
    <property type="project" value="UniProtKB-KW"/>
</dbReference>
<dbReference type="GO" id="GO:0003677">
    <property type="term" value="F:DNA binding"/>
    <property type="evidence" value="ECO:0007669"/>
    <property type="project" value="UniProtKB-UniRule"/>
</dbReference>
<dbReference type="GO" id="GO:0003899">
    <property type="term" value="F:DNA-directed RNA polymerase activity"/>
    <property type="evidence" value="ECO:0007669"/>
    <property type="project" value="UniProtKB-UniRule"/>
</dbReference>
<dbReference type="GO" id="GO:0032549">
    <property type="term" value="F:ribonucleoside binding"/>
    <property type="evidence" value="ECO:0007669"/>
    <property type="project" value="InterPro"/>
</dbReference>
<dbReference type="GO" id="GO:0006351">
    <property type="term" value="P:DNA-templated transcription"/>
    <property type="evidence" value="ECO:0007669"/>
    <property type="project" value="UniProtKB-UniRule"/>
</dbReference>
<dbReference type="CDD" id="cd00653">
    <property type="entry name" value="RNA_pol_B_RPB2"/>
    <property type="match status" value="1"/>
</dbReference>
<dbReference type="FunFam" id="3.90.1110.10:FF:000001">
    <property type="entry name" value="DNA-directed RNA polymerase subunit beta"/>
    <property type="match status" value="1"/>
</dbReference>
<dbReference type="FunFam" id="3.90.1800.10:FF:000001">
    <property type="entry name" value="DNA-directed RNA polymerase subunit beta"/>
    <property type="match status" value="1"/>
</dbReference>
<dbReference type="Gene3D" id="2.40.50.100">
    <property type="match status" value="1"/>
</dbReference>
<dbReference type="Gene3D" id="2.40.50.150">
    <property type="match status" value="1"/>
</dbReference>
<dbReference type="Gene3D" id="3.90.1100.10">
    <property type="match status" value="1"/>
</dbReference>
<dbReference type="Gene3D" id="2.30.150.10">
    <property type="entry name" value="DNA-directed RNA polymerase, beta subunit, external 1 domain"/>
    <property type="match status" value="1"/>
</dbReference>
<dbReference type="Gene3D" id="2.40.270.10">
    <property type="entry name" value="DNA-directed RNA polymerase, subunit 2, domain 6"/>
    <property type="match status" value="1"/>
</dbReference>
<dbReference type="Gene3D" id="3.90.1800.10">
    <property type="entry name" value="RNA polymerase alpha subunit dimerisation domain"/>
    <property type="match status" value="1"/>
</dbReference>
<dbReference type="Gene3D" id="3.90.1110.10">
    <property type="entry name" value="RNA polymerase Rpb2, domain 2"/>
    <property type="match status" value="1"/>
</dbReference>
<dbReference type="HAMAP" id="MF_01321">
    <property type="entry name" value="RNApol_bact_RpoB"/>
    <property type="match status" value="1"/>
</dbReference>
<dbReference type="InterPro" id="IPR042107">
    <property type="entry name" value="DNA-dir_RNA_pol_bsu_ext_1_sf"/>
</dbReference>
<dbReference type="InterPro" id="IPR019462">
    <property type="entry name" value="DNA-dir_RNA_pol_bsu_external_1"/>
</dbReference>
<dbReference type="InterPro" id="IPR015712">
    <property type="entry name" value="DNA-dir_RNA_pol_su2"/>
</dbReference>
<dbReference type="InterPro" id="IPR007120">
    <property type="entry name" value="DNA-dir_RNAP_su2_dom"/>
</dbReference>
<dbReference type="InterPro" id="IPR037033">
    <property type="entry name" value="DNA-dir_RNAP_su2_hyb_sf"/>
</dbReference>
<dbReference type="InterPro" id="IPR010243">
    <property type="entry name" value="RNA_pol_bsu_bac"/>
</dbReference>
<dbReference type="InterPro" id="IPR007121">
    <property type="entry name" value="RNA_pol_bsu_CS"/>
</dbReference>
<dbReference type="InterPro" id="IPR007644">
    <property type="entry name" value="RNA_pol_bsu_protrusion"/>
</dbReference>
<dbReference type="InterPro" id="IPR007642">
    <property type="entry name" value="RNA_pol_Rpb2_2"/>
</dbReference>
<dbReference type="InterPro" id="IPR037034">
    <property type="entry name" value="RNA_pol_Rpb2_2_sf"/>
</dbReference>
<dbReference type="InterPro" id="IPR007645">
    <property type="entry name" value="RNA_pol_Rpb2_3"/>
</dbReference>
<dbReference type="InterPro" id="IPR007641">
    <property type="entry name" value="RNA_pol_Rpb2_7"/>
</dbReference>
<dbReference type="InterPro" id="IPR014724">
    <property type="entry name" value="RNA_pol_RPB2_OB-fold"/>
</dbReference>
<dbReference type="NCBIfam" id="NF001616">
    <property type="entry name" value="PRK00405.1"/>
    <property type="match status" value="1"/>
</dbReference>
<dbReference type="NCBIfam" id="TIGR02013">
    <property type="entry name" value="rpoB"/>
    <property type="match status" value="1"/>
</dbReference>
<dbReference type="PANTHER" id="PTHR20856">
    <property type="entry name" value="DNA-DIRECTED RNA POLYMERASE I SUBUNIT 2"/>
    <property type="match status" value="1"/>
</dbReference>
<dbReference type="Pfam" id="PF04563">
    <property type="entry name" value="RNA_pol_Rpb2_1"/>
    <property type="match status" value="1"/>
</dbReference>
<dbReference type="Pfam" id="PF04561">
    <property type="entry name" value="RNA_pol_Rpb2_2"/>
    <property type="match status" value="1"/>
</dbReference>
<dbReference type="Pfam" id="PF04565">
    <property type="entry name" value="RNA_pol_Rpb2_3"/>
    <property type="match status" value="1"/>
</dbReference>
<dbReference type="Pfam" id="PF10385">
    <property type="entry name" value="RNA_pol_Rpb2_45"/>
    <property type="match status" value="1"/>
</dbReference>
<dbReference type="Pfam" id="PF00562">
    <property type="entry name" value="RNA_pol_Rpb2_6"/>
    <property type="match status" value="1"/>
</dbReference>
<dbReference type="Pfam" id="PF04560">
    <property type="entry name" value="RNA_pol_Rpb2_7"/>
    <property type="match status" value="1"/>
</dbReference>
<dbReference type="SUPFAM" id="SSF64484">
    <property type="entry name" value="beta and beta-prime subunits of DNA dependent RNA-polymerase"/>
    <property type="match status" value="1"/>
</dbReference>
<dbReference type="PROSITE" id="PS01166">
    <property type="entry name" value="RNA_POL_BETA"/>
    <property type="match status" value="1"/>
</dbReference>
<reference key="1">
    <citation type="journal article" date="2001" name="Proc. Natl. Acad. Sci. U.S.A.">
        <title>Genome sequence of an industrial microorganism Streptomyces avermitilis: deducing the ability of producing secondary metabolites.</title>
        <authorList>
            <person name="Omura S."/>
            <person name="Ikeda H."/>
            <person name="Ishikawa J."/>
            <person name="Hanamoto A."/>
            <person name="Takahashi C."/>
            <person name="Shinose M."/>
            <person name="Takahashi Y."/>
            <person name="Horikawa H."/>
            <person name="Nakazawa H."/>
            <person name="Osonoe T."/>
            <person name="Kikuchi H."/>
            <person name="Shiba T."/>
            <person name="Sakaki Y."/>
            <person name="Hattori M."/>
        </authorList>
    </citation>
    <scope>NUCLEOTIDE SEQUENCE [LARGE SCALE GENOMIC DNA]</scope>
    <source>
        <strain>ATCC 31267 / DSM 46492 / JCM 5070 / NBRC 14893 / NCIMB 12804 / NRRL 8165 / MA-4680</strain>
    </source>
</reference>
<reference key="2">
    <citation type="journal article" date="2003" name="Nat. Biotechnol.">
        <title>Complete genome sequence and comparative analysis of the industrial microorganism Streptomyces avermitilis.</title>
        <authorList>
            <person name="Ikeda H."/>
            <person name="Ishikawa J."/>
            <person name="Hanamoto A."/>
            <person name="Shinose M."/>
            <person name="Kikuchi H."/>
            <person name="Shiba T."/>
            <person name="Sakaki Y."/>
            <person name="Hattori M."/>
            <person name="Omura S."/>
        </authorList>
    </citation>
    <scope>NUCLEOTIDE SEQUENCE [LARGE SCALE GENOMIC DNA]</scope>
    <source>
        <strain>ATCC 31267 / DSM 46492 / JCM 5070 / NBRC 14893 / NCIMB 12804 / NRRL 8165 / MA-4680</strain>
    </source>
</reference>